<evidence type="ECO:0000255" key="1"/>
<evidence type="ECO:0000269" key="2">
    <source>
    </source>
</evidence>
<evidence type="ECO:0000269" key="3">
    <source>
    </source>
</evidence>
<evidence type="ECO:0000269" key="4">
    <source>
    </source>
</evidence>
<evidence type="ECO:0000303" key="5">
    <source>
    </source>
</evidence>
<evidence type="ECO:0000305" key="6"/>
<evidence type="ECO:0000312" key="7">
    <source>
        <dbReference type="HGNC" id="HGNC:30596"/>
    </source>
</evidence>
<gene>
    <name evidence="7" type="primary">PIGZ</name>
    <name type="synonym">SMP3</name>
</gene>
<proteinExistence type="evidence at protein level"/>
<feature type="chain" id="PRO_0000246268" description="GPI alpha-1,2-mannosyltransferase 4">
    <location>
        <begin position="1"/>
        <end position="579"/>
    </location>
</feature>
<feature type="transmembrane region" description="Helical" evidence="1">
    <location>
        <begin position="131"/>
        <end position="151"/>
    </location>
</feature>
<feature type="transmembrane region" description="Helical" evidence="1">
    <location>
        <begin position="156"/>
        <end position="173"/>
    </location>
</feature>
<feature type="transmembrane region" description="Helical" evidence="1">
    <location>
        <begin position="180"/>
        <end position="200"/>
    </location>
</feature>
<feature type="transmembrane region" description="Helical" evidence="1">
    <location>
        <begin position="216"/>
        <end position="236"/>
    </location>
</feature>
<feature type="transmembrane region" description="Helical" evidence="1">
    <location>
        <begin position="258"/>
        <end position="278"/>
    </location>
</feature>
<feature type="transmembrane region" description="Helical" evidence="1">
    <location>
        <begin position="369"/>
        <end position="389"/>
    </location>
</feature>
<feature type="transmembrane region" description="Helical" evidence="1">
    <location>
        <begin position="391"/>
        <end position="411"/>
    </location>
</feature>
<feature type="transmembrane region" description="Helical" evidence="1">
    <location>
        <begin position="416"/>
        <end position="436"/>
    </location>
</feature>
<feature type="sequence variant" id="VAR_054965" description="In dbSNP:rs574365." evidence="2 4">
    <original>A</original>
    <variation>T</variation>
    <location>
        <position position="266"/>
    </location>
</feature>
<feature type="sequence variant" id="VAR_027032" description="In dbSNP:rs4916589." evidence="2 4">
    <original>R</original>
    <variation>Q</variation>
    <location>
        <position position="340"/>
    </location>
</feature>
<feature type="sequence variant" id="VAR_027033" description="In dbSNP:rs1147238.">
    <original>V</original>
    <variation>A</variation>
    <location>
        <position position="417"/>
    </location>
</feature>
<feature type="sequence variant" id="VAR_027034" description="In dbSNP:rs17855662." evidence="4">
    <original>M</original>
    <variation>I</variation>
    <location>
        <position position="487"/>
    </location>
</feature>
<comment type="function">
    <text evidence="3">Alpha-1,2-mannosyltransferase that catalyzes the transfer of the fourth mannose, via an alpha-1,2 bond, from a dolichol-phosphate-mannose (Dol-P-Man) to an alpha-D-Man-(1-&gt;2)-alpha-D-Man-(1-&gt;6)-2-PEtn-alpha-D-Man-(1-&gt;4)-alpha-D-GlcN-(1-&gt;6)-(1-radyl,2-acyl-sn-glycero-3-phospho)-2-acyl-inositol (also termed H6) intermediate and participates in the twelfth step of the glycosylphosphatidylinositol-anchor biosynthesis (PubMed:15208306). The presence of a fourth mannose in GPI is facultative, suggesting that it only exists in some tissues (PubMed:15208306).</text>
</comment>
<comment type="pathway">
    <text evidence="3">Glycolipid biosynthesis; glycosylphosphatidylinositol-anchor biosynthesis.</text>
</comment>
<comment type="subcellular location">
    <subcellularLocation>
        <location evidence="3">Endoplasmic reticulum membrane</location>
        <topology evidence="1">Multi-pass membrane protein</topology>
    </subcellularLocation>
</comment>
<comment type="tissue specificity">
    <text evidence="3">Widely expressed at low level, with highest level in brain and colon.</text>
</comment>
<comment type="similarity">
    <text evidence="6">Belongs to the glycosyltransferase 22 family. PIGZ subfamily.</text>
</comment>
<comment type="caution">
    <text evidence="6">It is uncertain whether Met-1 or Met-32 is the initiator.</text>
</comment>
<keyword id="KW-0256">Endoplasmic reticulum</keyword>
<keyword id="KW-0328">Glycosyltransferase</keyword>
<keyword id="KW-0337">GPI-anchor biosynthesis</keyword>
<keyword id="KW-0472">Membrane</keyword>
<keyword id="KW-1267">Proteomics identification</keyword>
<keyword id="KW-1185">Reference proteome</keyword>
<keyword id="KW-0808">Transferase</keyword>
<keyword id="KW-0812">Transmembrane</keyword>
<keyword id="KW-1133">Transmembrane helix</keyword>
<protein>
    <recommendedName>
        <fullName evidence="6">GPI alpha-1,2-mannosyltransferase 4</fullName>
        <ecNumber evidence="3">2.4.1.-</ecNumber>
    </recommendedName>
    <alternativeName>
        <fullName>GPI mannosyltransferase IV</fullName>
        <shortName>GPI-MT-IV</shortName>
    </alternativeName>
    <alternativeName>
        <fullName>Phosphatidylinositol-glycan biosynthesis class Z protein</fullName>
        <shortName>PIG-Z</shortName>
    </alternativeName>
    <alternativeName>
        <fullName>SMP3 homolog</fullName>
        <shortName evidence="5">hSMP3</shortName>
    </alternativeName>
</protein>
<reference key="1">
    <citation type="journal article" date="2004" name="Nat. Genet.">
        <title>Complete sequencing and characterization of 21,243 full-length human cDNAs.</title>
        <authorList>
            <person name="Ota T."/>
            <person name="Suzuki Y."/>
            <person name="Nishikawa T."/>
            <person name="Otsuki T."/>
            <person name="Sugiyama T."/>
            <person name="Irie R."/>
            <person name="Wakamatsu A."/>
            <person name="Hayashi K."/>
            <person name="Sato H."/>
            <person name="Nagai K."/>
            <person name="Kimura K."/>
            <person name="Makita H."/>
            <person name="Sekine M."/>
            <person name="Obayashi M."/>
            <person name="Nishi T."/>
            <person name="Shibahara T."/>
            <person name="Tanaka T."/>
            <person name="Ishii S."/>
            <person name="Yamamoto J."/>
            <person name="Saito K."/>
            <person name="Kawai Y."/>
            <person name="Isono Y."/>
            <person name="Nakamura Y."/>
            <person name="Nagahari K."/>
            <person name="Murakami K."/>
            <person name="Yasuda T."/>
            <person name="Iwayanagi T."/>
            <person name="Wagatsuma M."/>
            <person name="Shiratori A."/>
            <person name="Sudo H."/>
            <person name="Hosoiri T."/>
            <person name="Kaku Y."/>
            <person name="Kodaira H."/>
            <person name="Kondo H."/>
            <person name="Sugawara M."/>
            <person name="Takahashi M."/>
            <person name="Kanda K."/>
            <person name="Yokoi T."/>
            <person name="Furuya T."/>
            <person name="Kikkawa E."/>
            <person name="Omura Y."/>
            <person name="Abe K."/>
            <person name="Kamihara K."/>
            <person name="Katsuta N."/>
            <person name="Sato K."/>
            <person name="Tanikawa M."/>
            <person name="Yamazaki M."/>
            <person name="Ninomiya K."/>
            <person name="Ishibashi T."/>
            <person name="Yamashita H."/>
            <person name="Murakawa K."/>
            <person name="Fujimori K."/>
            <person name="Tanai H."/>
            <person name="Kimata M."/>
            <person name="Watanabe M."/>
            <person name="Hiraoka S."/>
            <person name="Chiba Y."/>
            <person name="Ishida S."/>
            <person name="Ono Y."/>
            <person name="Takiguchi S."/>
            <person name="Watanabe S."/>
            <person name="Yosida M."/>
            <person name="Hotuta T."/>
            <person name="Kusano J."/>
            <person name="Kanehori K."/>
            <person name="Takahashi-Fujii A."/>
            <person name="Hara H."/>
            <person name="Tanase T.-O."/>
            <person name="Nomura Y."/>
            <person name="Togiya S."/>
            <person name="Komai F."/>
            <person name="Hara R."/>
            <person name="Takeuchi K."/>
            <person name="Arita M."/>
            <person name="Imose N."/>
            <person name="Musashino K."/>
            <person name="Yuuki H."/>
            <person name="Oshima A."/>
            <person name="Sasaki N."/>
            <person name="Aotsuka S."/>
            <person name="Yoshikawa Y."/>
            <person name="Matsunawa H."/>
            <person name="Ichihara T."/>
            <person name="Shiohata N."/>
            <person name="Sano S."/>
            <person name="Moriya S."/>
            <person name="Momiyama H."/>
            <person name="Satoh N."/>
            <person name="Takami S."/>
            <person name="Terashima Y."/>
            <person name="Suzuki O."/>
            <person name="Nakagawa S."/>
            <person name="Senoh A."/>
            <person name="Mizoguchi H."/>
            <person name="Goto Y."/>
            <person name="Shimizu F."/>
            <person name="Wakebe H."/>
            <person name="Hishigaki H."/>
            <person name="Watanabe T."/>
            <person name="Sugiyama A."/>
            <person name="Takemoto M."/>
            <person name="Kawakami B."/>
            <person name="Yamazaki M."/>
            <person name="Watanabe K."/>
            <person name="Kumagai A."/>
            <person name="Itakura S."/>
            <person name="Fukuzumi Y."/>
            <person name="Fujimori Y."/>
            <person name="Komiyama M."/>
            <person name="Tashiro H."/>
            <person name="Tanigami A."/>
            <person name="Fujiwara T."/>
            <person name="Ono T."/>
            <person name="Yamada K."/>
            <person name="Fujii Y."/>
            <person name="Ozaki K."/>
            <person name="Hirao M."/>
            <person name="Ohmori Y."/>
            <person name="Kawabata A."/>
            <person name="Hikiji T."/>
            <person name="Kobatake N."/>
            <person name="Inagaki H."/>
            <person name="Ikema Y."/>
            <person name="Okamoto S."/>
            <person name="Okitani R."/>
            <person name="Kawakami T."/>
            <person name="Noguchi S."/>
            <person name="Itoh T."/>
            <person name="Shigeta K."/>
            <person name="Senba T."/>
            <person name="Matsumura K."/>
            <person name="Nakajima Y."/>
            <person name="Mizuno T."/>
            <person name="Morinaga M."/>
            <person name="Sasaki M."/>
            <person name="Togashi T."/>
            <person name="Oyama M."/>
            <person name="Hata H."/>
            <person name="Watanabe M."/>
            <person name="Komatsu T."/>
            <person name="Mizushima-Sugano J."/>
            <person name="Satoh T."/>
            <person name="Shirai Y."/>
            <person name="Takahashi Y."/>
            <person name="Nakagawa K."/>
            <person name="Okumura K."/>
            <person name="Nagase T."/>
            <person name="Nomura N."/>
            <person name="Kikuchi H."/>
            <person name="Masuho Y."/>
            <person name="Yamashita R."/>
            <person name="Nakai K."/>
            <person name="Yada T."/>
            <person name="Nakamura Y."/>
            <person name="Ohara O."/>
            <person name="Isogai T."/>
            <person name="Sugano S."/>
        </authorList>
    </citation>
    <scope>NUCLEOTIDE SEQUENCE [LARGE SCALE MRNA]</scope>
    <scope>VARIANTS THR-266 AND GLN-340</scope>
    <source>
        <tissue>Teratocarcinoma</tissue>
    </source>
</reference>
<reference key="2">
    <citation type="journal article" date="2006" name="Nature">
        <title>The DNA sequence, annotation and analysis of human chromosome 3.</title>
        <authorList>
            <person name="Muzny D.M."/>
            <person name="Scherer S.E."/>
            <person name="Kaul R."/>
            <person name="Wang J."/>
            <person name="Yu J."/>
            <person name="Sudbrak R."/>
            <person name="Buhay C.J."/>
            <person name="Chen R."/>
            <person name="Cree A."/>
            <person name="Ding Y."/>
            <person name="Dugan-Rocha S."/>
            <person name="Gill R."/>
            <person name="Gunaratne P."/>
            <person name="Harris R.A."/>
            <person name="Hawes A.C."/>
            <person name="Hernandez J."/>
            <person name="Hodgson A.V."/>
            <person name="Hume J."/>
            <person name="Jackson A."/>
            <person name="Khan Z.M."/>
            <person name="Kovar-Smith C."/>
            <person name="Lewis L.R."/>
            <person name="Lozado R.J."/>
            <person name="Metzker M.L."/>
            <person name="Milosavljevic A."/>
            <person name="Miner G.R."/>
            <person name="Morgan M.B."/>
            <person name="Nazareth L.V."/>
            <person name="Scott G."/>
            <person name="Sodergren E."/>
            <person name="Song X.-Z."/>
            <person name="Steffen D."/>
            <person name="Wei S."/>
            <person name="Wheeler D.A."/>
            <person name="Wright M.W."/>
            <person name="Worley K.C."/>
            <person name="Yuan Y."/>
            <person name="Zhang Z."/>
            <person name="Adams C.Q."/>
            <person name="Ansari-Lari M.A."/>
            <person name="Ayele M."/>
            <person name="Brown M.J."/>
            <person name="Chen G."/>
            <person name="Chen Z."/>
            <person name="Clendenning J."/>
            <person name="Clerc-Blankenburg K.P."/>
            <person name="Chen R."/>
            <person name="Chen Z."/>
            <person name="Davis C."/>
            <person name="Delgado O."/>
            <person name="Dinh H.H."/>
            <person name="Dong W."/>
            <person name="Draper H."/>
            <person name="Ernst S."/>
            <person name="Fu G."/>
            <person name="Gonzalez-Garay M.L."/>
            <person name="Garcia D.K."/>
            <person name="Gillett W."/>
            <person name="Gu J."/>
            <person name="Hao B."/>
            <person name="Haugen E."/>
            <person name="Havlak P."/>
            <person name="He X."/>
            <person name="Hennig S."/>
            <person name="Hu S."/>
            <person name="Huang W."/>
            <person name="Jackson L.R."/>
            <person name="Jacob L.S."/>
            <person name="Kelly S.H."/>
            <person name="Kube M."/>
            <person name="Levy R."/>
            <person name="Li Z."/>
            <person name="Liu B."/>
            <person name="Liu J."/>
            <person name="Liu W."/>
            <person name="Lu J."/>
            <person name="Maheshwari M."/>
            <person name="Nguyen B.-V."/>
            <person name="Okwuonu G.O."/>
            <person name="Palmeiri A."/>
            <person name="Pasternak S."/>
            <person name="Perez L.M."/>
            <person name="Phelps K.A."/>
            <person name="Plopper F.J."/>
            <person name="Qiang B."/>
            <person name="Raymond C."/>
            <person name="Rodriguez R."/>
            <person name="Saenphimmachak C."/>
            <person name="Santibanez J."/>
            <person name="Shen H."/>
            <person name="Shen Y."/>
            <person name="Subramanian S."/>
            <person name="Tabor P.E."/>
            <person name="Verduzco D."/>
            <person name="Waldron L."/>
            <person name="Wang J."/>
            <person name="Wang J."/>
            <person name="Wang Q."/>
            <person name="Williams G.A."/>
            <person name="Wong G.K.-S."/>
            <person name="Yao Z."/>
            <person name="Zhang J."/>
            <person name="Zhang X."/>
            <person name="Zhao G."/>
            <person name="Zhou J."/>
            <person name="Zhou Y."/>
            <person name="Nelson D."/>
            <person name="Lehrach H."/>
            <person name="Reinhardt R."/>
            <person name="Naylor S.L."/>
            <person name="Yang H."/>
            <person name="Olson M."/>
            <person name="Weinstock G."/>
            <person name="Gibbs R.A."/>
        </authorList>
    </citation>
    <scope>NUCLEOTIDE SEQUENCE [LARGE SCALE GENOMIC DNA]</scope>
</reference>
<reference key="3">
    <citation type="journal article" date="2004" name="Genome Res.">
        <title>The status, quality, and expansion of the NIH full-length cDNA project: the Mammalian Gene Collection (MGC).</title>
        <authorList>
            <consortium name="The MGC Project Team"/>
        </authorList>
    </citation>
    <scope>NUCLEOTIDE SEQUENCE [LARGE SCALE MRNA]</scope>
    <scope>VARIANTS THR-266; GLN-340 AND ILE-487</scope>
    <source>
        <tissue>Skin</tissue>
    </source>
</reference>
<reference key="4">
    <citation type="journal article" date="2004" name="J. Biol. Chem.">
        <title>Human Smp3p adds a fourth mannose to yeast and human glycosylphosphatidylinositol precursors in vivo.</title>
        <authorList>
            <person name="Taron B.W."/>
            <person name="Colussi P.A."/>
            <person name="Wiedman J.M."/>
            <person name="Orlean P."/>
            <person name="Taron C.H."/>
        </authorList>
    </citation>
    <scope>FUNCTION</scope>
    <scope>CATALYTIC ACTIVITY</scope>
    <scope>PATHWAY</scope>
    <scope>SUBCELLULAR LOCATION</scope>
    <scope>TISSUE SPECIFICITY</scope>
</reference>
<accession>Q86VD9</accession>
<accession>Q9H9G6</accession>
<sequence>MQICGSSVASVAAGTSFQVLGPVCWQQLDLKMAVRVLWGGLSLLRVLWCLLPQTGYVHPDEFFQSPEVMAEDILGVQAARPWEFYPSSSCRSVLFPLLISGSTFWLLRLWEELGPWPGLVSGYALLVGPRLLLTALSFALDGAVYHLAPPMGADRWNALALLSGSYVTLVFYTRTFSNTIEGLLFTWLLVLVSSHVTWGPTRKEPAPGPRWRSWLLGGIVAAGFFNRPTFLAFAVVPLYLWGTRGATNPGLKSLTREALVLLPGAALTAAVFVATDSWYFSSPATSRNLVLTPVNFLHYNLNPQNLARHGTHARLTHLAVNGFLLFGVLHAQALQAAWQRLQVGLQASAQMGLLRALGARSLLSSPRSYLLLLYFMPLALLSAFSHQEARFLIPLLVPLVLLCSPQTQPVPWKGTVVLFNALGALLFGCLHQGGLVPGLEYLEQVVHAPVLPSTPTHYTLLFTHTYMPPRHLLHLPGLGAPVEVVDMGGTEDWALCQTLKSFTRQPACQVAGGPWLCRLFVVTPGTTRRAVEKCSFPFKNETLLFPHLTLEDPPALSSLLSGAWRDHLSLHIVELGEET</sequence>
<dbReference type="EC" id="2.4.1.-" evidence="3"/>
<dbReference type="EMBL" id="AK022830">
    <property type="protein sequence ID" value="BAB14263.1"/>
    <property type="molecule type" value="mRNA"/>
</dbReference>
<dbReference type="EMBL" id="AC011322">
    <property type="status" value="NOT_ANNOTATED_CDS"/>
    <property type="molecule type" value="Genomic_DNA"/>
</dbReference>
<dbReference type="EMBL" id="BC044640">
    <property type="protein sequence ID" value="AAH44640.1"/>
    <property type="molecule type" value="mRNA"/>
</dbReference>
<dbReference type="CCDS" id="CCDS3324.1"/>
<dbReference type="RefSeq" id="NP_079439.2">
    <property type="nucleotide sequence ID" value="NM_025163.3"/>
</dbReference>
<dbReference type="BioGRID" id="123197">
    <property type="interactions" value="3"/>
</dbReference>
<dbReference type="FunCoup" id="Q86VD9">
    <property type="interactions" value="499"/>
</dbReference>
<dbReference type="IntAct" id="Q86VD9">
    <property type="interactions" value="2"/>
</dbReference>
<dbReference type="STRING" id="9606.ENSP00000413405"/>
<dbReference type="CAZy" id="GT22">
    <property type="family name" value="Glycosyltransferase Family 22"/>
</dbReference>
<dbReference type="GlyGen" id="Q86VD9">
    <property type="glycosylation" value="1 site"/>
</dbReference>
<dbReference type="iPTMnet" id="Q86VD9"/>
<dbReference type="PhosphoSitePlus" id="Q86VD9"/>
<dbReference type="BioMuta" id="PIGZ"/>
<dbReference type="DMDM" id="311033491"/>
<dbReference type="MassIVE" id="Q86VD9"/>
<dbReference type="PaxDb" id="9606-ENSP00000413405"/>
<dbReference type="PeptideAtlas" id="Q86VD9"/>
<dbReference type="ProteomicsDB" id="69989"/>
<dbReference type="Antibodypedia" id="33954">
    <property type="antibodies" value="70 antibodies from 18 providers"/>
</dbReference>
<dbReference type="DNASU" id="80235"/>
<dbReference type="Ensembl" id="ENST00000412723.6">
    <property type="protein sequence ID" value="ENSP00000413405.1"/>
    <property type="gene ID" value="ENSG00000119227.8"/>
</dbReference>
<dbReference type="GeneID" id="80235"/>
<dbReference type="KEGG" id="hsa:80235"/>
<dbReference type="MANE-Select" id="ENST00000412723.6">
    <property type="protein sequence ID" value="ENSP00000413405.1"/>
    <property type="RefSeq nucleotide sequence ID" value="NM_025163.4"/>
    <property type="RefSeq protein sequence ID" value="NP_079439.2"/>
</dbReference>
<dbReference type="UCSC" id="uc003fxh.5">
    <property type="organism name" value="human"/>
</dbReference>
<dbReference type="AGR" id="HGNC:30596"/>
<dbReference type="CTD" id="80235"/>
<dbReference type="DisGeNET" id="80235"/>
<dbReference type="GeneCards" id="PIGZ"/>
<dbReference type="HGNC" id="HGNC:30596">
    <property type="gene designation" value="PIGZ"/>
</dbReference>
<dbReference type="HPA" id="ENSG00000119227">
    <property type="expression patterns" value="Tissue enhanced (brain, intestine)"/>
</dbReference>
<dbReference type="MIM" id="611671">
    <property type="type" value="gene"/>
</dbReference>
<dbReference type="neXtProt" id="NX_Q86VD9"/>
<dbReference type="OpenTargets" id="ENSG00000119227"/>
<dbReference type="PharmGKB" id="PA142671171"/>
<dbReference type="VEuPathDB" id="HostDB:ENSG00000119227"/>
<dbReference type="eggNOG" id="KOG4123">
    <property type="taxonomic scope" value="Eukaryota"/>
</dbReference>
<dbReference type="GeneTree" id="ENSGT00940000163773"/>
<dbReference type="HOGENOM" id="CLU_022957_1_1_1"/>
<dbReference type="InParanoid" id="Q86VD9"/>
<dbReference type="OMA" id="HGIHPRY"/>
<dbReference type="OrthoDB" id="10066429at2759"/>
<dbReference type="PAN-GO" id="Q86VD9">
    <property type="GO annotations" value="3 GO annotations based on evolutionary models"/>
</dbReference>
<dbReference type="PhylomeDB" id="Q86VD9"/>
<dbReference type="TreeFam" id="TF324461"/>
<dbReference type="PathwayCommons" id="Q86VD9"/>
<dbReference type="Reactome" id="R-HSA-162710">
    <property type="pathway name" value="Synthesis of glycosylphosphatidylinositol (GPI)"/>
</dbReference>
<dbReference type="UniPathway" id="UPA00196"/>
<dbReference type="BioGRID-ORCS" id="80235">
    <property type="hits" value="11 hits in 1148 CRISPR screens"/>
</dbReference>
<dbReference type="ChiTaRS" id="PIGZ">
    <property type="organism name" value="human"/>
</dbReference>
<dbReference type="GenomeRNAi" id="80235"/>
<dbReference type="Pharos" id="Q86VD9">
    <property type="development level" value="Tbio"/>
</dbReference>
<dbReference type="PRO" id="PR:Q86VD9"/>
<dbReference type="Proteomes" id="UP000005640">
    <property type="component" value="Chromosome 3"/>
</dbReference>
<dbReference type="RNAct" id="Q86VD9">
    <property type="molecule type" value="protein"/>
</dbReference>
<dbReference type="Bgee" id="ENSG00000119227">
    <property type="expression patterns" value="Expressed in mucosa of transverse colon and 144 other cell types or tissues"/>
</dbReference>
<dbReference type="ExpressionAtlas" id="Q86VD9">
    <property type="expression patterns" value="baseline and differential"/>
</dbReference>
<dbReference type="GO" id="GO:0005783">
    <property type="term" value="C:endoplasmic reticulum"/>
    <property type="evidence" value="ECO:0000314"/>
    <property type="project" value="UniProtKB"/>
</dbReference>
<dbReference type="GO" id="GO:0005789">
    <property type="term" value="C:endoplasmic reticulum membrane"/>
    <property type="evidence" value="ECO:0000318"/>
    <property type="project" value="GO_Central"/>
</dbReference>
<dbReference type="GO" id="GO:0000026">
    <property type="term" value="F:alpha-1,2-mannosyltransferase activity"/>
    <property type="evidence" value="ECO:0000315"/>
    <property type="project" value="UniProtKB"/>
</dbReference>
<dbReference type="GO" id="GO:0000030">
    <property type="term" value="F:mannosyltransferase activity"/>
    <property type="evidence" value="ECO:0000316"/>
    <property type="project" value="UniProtKB"/>
</dbReference>
<dbReference type="GO" id="GO:0006506">
    <property type="term" value="P:GPI anchor biosynthetic process"/>
    <property type="evidence" value="ECO:0000315"/>
    <property type="project" value="UniProtKB"/>
</dbReference>
<dbReference type="InterPro" id="IPR005599">
    <property type="entry name" value="GPI_mannosylTrfase"/>
</dbReference>
<dbReference type="PANTHER" id="PTHR22760">
    <property type="entry name" value="GLYCOSYLTRANSFERASE"/>
    <property type="match status" value="1"/>
</dbReference>
<dbReference type="PANTHER" id="PTHR22760:SF3">
    <property type="entry name" value="GPI MANNOSYLTRANSFERASE 4"/>
    <property type="match status" value="1"/>
</dbReference>
<dbReference type="Pfam" id="PF03901">
    <property type="entry name" value="Glyco_transf_22"/>
    <property type="match status" value="1"/>
</dbReference>
<organism>
    <name type="scientific">Homo sapiens</name>
    <name type="common">Human</name>
    <dbReference type="NCBI Taxonomy" id="9606"/>
    <lineage>
        <taxon>Eukaryota</taxon>
        <taxon>Metazoa</taxon>
        <taxon>Chordata</taxon>
        <taxon>Craniata</taxon>
        <taxon>Vertebrata</taxon>
        <taxon>Euteleostomi</taxon>
        <taxon>Mammalia</taxon>
        <taxon>Eutheria</taxon>
        <taxon>Euarchontoglires</taxon>
        <taxon>Primates</taxon>
        <taxon>Haplorrhini</taxon>
        <taxon>Catarrhini</taxon>
        <taxon>Hominidae</taxon>
        <taxon>Homo</taxon>
    </lineage>
</organism>
<name>PIGZ_HUMAN</name>